<dbReference type="EC" id="3.5.1.5" evidence="1"/>
<dbReference type="EMBL" id="CR936257">
    <property type="protein sequence ID" value="CAI49096.1"/>
    <property type="molecule type" value="Genomic_DNA"/>
</dbReference>
<dbReference type="RefSeq" id="WP_011322725.1">
    <property type="nucleotide sequence ID" value="NC_007426.1"/>
</dbReference>
<dbReference type="SMR" id="Q3IRZ5"/>
<dbReference type="STRING" id="348780.NP_2010A"/>
<dbReference type="MEROPS" id="M38.982"/>
<dbReference type="EnsemblBacteria" id="CAI49096">
    <property type="protein sequence ID" value="CAI49096"/>
    <property type="gene ID" value="NP_2010A"/>
</dbReference>
<dbReference type="GeneID" id="3703448"/>
<dbReference type="KEGG" id="nph:NP_2010A"/>
<dbReference type="eggNOG" id="arCOG00698">
    <property type="taxonomic scope" value="Archaea"/>
</dbReference>
<dbReference type="HOGENOM" id="CLU_000980_0_0_2"/>
<dbReference type="OrthoDB" id="42542at2157"/>
<dbReference type="UniPathway" id="UPA00258">
    <property type="reaction ID" value="UER00370"/>
</dbReference>
<dbReference type="Proteomes" id="UP000002698">
    <property type="component" value="Chromosome"/>
</dbReference>
<dbReference type="GO" id="GO:0005737">
    <property type="term" value="C:cytoplasm"/>
    <property type="evidence" value="ECO:0007669"/>
    <property type="project" value="UniProtKB-SubCell"/>
</dbReference>
<dbReference type="GO" id="GO:0016812">
    <property type="term" value="F:hydrolase activity, acting on carbon-nitrogen (but not peptide) bonds, in cyclic amides"/>
    <property type="evidence" value="ECO:0007669"/>
    <property type="project" value="InterPro"/>
</dbReference>
<dbReference type="GO" id="GO:0016151">
    <property type="term" value="F:nickel cation binding"/>
    <property type="evidence" value="ECO:0007669"/>
    <property type="project" value="UniProtKB-UniRule"/>
</dbReference>
<dbReference type="GO" id="GO:0009039">
    <property type="term" value="F:urease activity"/>
    <property type="evidence" value="ECO:0007669"/>
    <property type="project" value="UniProtKB-UniRule"/>
</dbReference>
<dbReference type="GO" id="GO:0043419">
    <property type="term" value="P:urea catabolic process"/>
    <property type="evidence" value="ECO:0007669"/>
    <property type="project" value="UniProtKB-UniRule"/>
</dbReference>
<dbReference type="CDD" id="cd00375">
    <property type="entry name" value="Urease_alpha"/>
    <property type="match status" value="1"/>
</dbReference>
<dbReference type="Gene3D" id="3.20.20.140">
    <property type="entry name" value="Metal-dependent hydrolases"/>
    <property type="match status" value="1"/>
</dbReference>
<dbReference type="Gene3D" id="2.30.40.10">
    <property type="entry name" value="Urease, subunit C, domain 1"/>
    <property type="match status" value="1"/>
</dbReference>
<dbReference type="HAMAP" id="MF_01953">
    <property type="entry name" value="Urease_alpha"/>
    <property type="match status" value="1"/>
</dbReference>
<dbReference type="InterPro" id="IPR006680">
    <property type="entry name" value="Amidohydro-rel"/>
</dbReference>
<dbReference type="InterPro" id="IPR002195">
    <property type="entry name" value="Dihydroorotase_CS"/>
</dbReference>
<dbReference type="InterPro" id="IPR011059">
    <property type="entry name" value="Metal-dep_hydrolase_composite"/>
</dbReference>
<dbReference type="InterPro" id="IPR032466">
    <property type="entry name" value="Metal_Hydrolase"/>
</dbReference>
<dbReference type="InterPro" id="IPR011612">
    <property type="entry name" value="Urease_alpha_N_dom"/>
</dbReference>
<dbReference type="InterPro" id="IPR050112">
    <property type="entry name" value="Urease_alpha_subunit"/>
</dbReference>
<dbReference type="InterPro" id="IPR017950">
    <property type="entry name" value="Urease_AS"/>
</dbReference>
<dbReference type="InterPro" id="IPR005848">
    <property type="entry name" value="Urease_asu"/>
</dbReference>
<dbReference type="InterPro" id="IPR017951">
    <property type="entry name" value="Urease_asu_c"/>
</dbReference>
<dbReference type="NCBIfam" id="NF009686">
    <property type="entry name" value="PRK13207.1"/>
    <property type="match status" value="1"/>
</dbReference>
<dbReference type="NCBIfam" id="TIGR01792">
    <property type="entry name" value="urease_alph"/>
    <property type="match status" value="1"/>
</dbReference>
<dbReference type="PANTHER" id="PTHR43440">
    <property type="entry name" value="UREASE"/>
    <property type="match status" value="1"/>
</dbReference>
<dbReference type="PANTHER" id="PTHR43440:SF1">
    <property type="entry name" value="UREASE"/>
    <property type="match status" value="1"/>
</dbReference>
<dbReference type="Pfam" id="PF01979">
    <property type="entry name" value="Amidohydro_1"/>
    <property type="match status" value="1"/>
</dbReference>
<dbReference type="Pfam" id="PF00449">
    <property type="entry name" value="Urease_alpha"/>
    <property type="match status" value="1"/>
</dbReference>
<dbReference type="PRINTS" id="PR01752">
    <property type="entry name" value="UREASE"/>
</dbReference>
<dbReference type="SUPFAM" id="SSF51338">
    <property type="entry name" value="Composite domain of metallo-dependent hydrolases"/>
    <property type="match status" value="1"/>
</dbReference>
<dbReference type="SUPFAM" id="SSF51556">
    <property type="entry name" value="Metallo-dependent hydrolases"/>
    <property type="match status" value="1"/>
</dbReference>
<dbReference type="PROSITE" id="PS00145">
    <property type="entry name" value="UREASE_2"/>
    <property type="match status" value="1"/>
</dbReference>
<dbReference type="PROSITE" id="PS51368">
    <property type="entry name" value="UREASE_3"/>
    <property type="match status" value="1"/>
</dbReference>
<protein>
    <recommendedName>
        <fullName evidence="1">Urease subunit alpha</fullName>
        <ecNumber evidence="1">3.5.1.5</ecNumber>
    </recommendedName>
    <alternativeName>
        <fullName evidence="1">Urea amidohydrolase subunit alpha</fullName>
    </alternativeName>
</protein>
<proteinExistence type="inferred from homology"/>
<sequence length="570" mass="60891">MTKTLPREEYTDLFGATVGDRIRLGDTSLLAEIEHDHATYGDEAVFGGGKTMRDGMGMQSGTTQADGALDWVFSNVVVVDPVLGIRKGDIGVRNGRIVGVGKAGNPDTMDGVDDELVVGPSTDTVPADGLIATPGGLDIHVHFNSPQLVDHALASGITTMFGGGYGGGATTCTPGPNNVKRFLQAADEWPVNVGFYGKGNSSQPEGLAEQVEAGACGMKLHEDWGSTPAAIDTCLEYAESADIQVCIHTDTLNESGFVEETFDAIDGRAIHTFHIEGAGGGHAPDVLELVGHEHMLPSSTNPSMPYTENTFDEHLDMVMVCHHLNPDVPEDVAFAESRIRAETIAAEDVLHDTGAISMMTSDSQAMGRMAEVISRTWQTADKMKQQRGPLPEDDGTDADNHRIKRYVAKYTINPAIVAGIDDYVGSIEPGKLADIVLWEPAFFGIKPKTVIKGGFPVYSQMGEANGSLMTCEPVEMRPRAGAMGNAKHGLSVTFVSGTAHEAGVGDAYGLDTPVRPVDGTRSVRKADMLYNDYCPDDIDIDAQTFEVSIDGEHVTCEPADELPLAQRYHL</sequence>
<comment type="catalytic activity">
    <reaction evidence="1">
        <text>urea + 2 H2O + H(+) = hydrogencarbonate + 2 NH4(+)</text>
        <dbReference type="Rhea" id="RHEA:20557"/>
        <dbReference type="ChEBI" id="CHEBI:15377"/>
        <dbReference type="ChEBI" id="CHEBI:15378"/>
        <dbReference type="ChEBI" id="CHEBI:16199"/>
        <dbReference type="ChEBI" id="CHEBI:17544"/>
        <dbReference type="ChEBI" id="CHEBI:28938"/>
        <dbReference type="EC" id="3.5.1.5"/>
    </reaction>
</comment>
<comment type="cofactor">
    <cofactor evidence="1">
        <name>Ni cation</name>
        <dbReference type="ChEBI" id="CHEBI:25516"/>
    </cofactor>
    <text evidence="1">Binds 2 nickel ions per subunit.</text>
</comment>
<comment type="pathway">
    <text evidence="1">Nitrogen metabolism; urea degradation; CO(2) and NH(3) from urea (urease route): step 1/1.</text>
</comment>
<comment type="subunit">
    <text evidence="1">Heterotrimer of UreA (gamma), UreB (beta) and UreC (alpha) subunits. Three heterotrimers associate to form the active enzyme.</text>
</comment>
<comment type="subcellular location">
    <subcellularLocation>
        <location evidence="1">Cytoplasm</location>
    </subcellularLocation>
</comment>
<comment type="PTM">
    <text evidence="1">Carboxylation allows a single lysine to coordinate two nickel ions.</text>
</comment>
<comment type="similarity">
    <text evidence="1">Belongs to the metallo-dependent hydrolases superfamily. Urease alpha subunit family.</text>
</comment>
<accession>Q3IRZ5</accession>
<feature type="chain" id="PRO_0000234194" description="Urease subunit alpha">
    <location>
        <begin position="1"/>
        <end position="570"/>
    </location>
</feature>
<feature type="domain" description="Urease" evidence="1">
    <location>
        <begin position="135"/>
        <end position="570"/>
    </location>
</feature>
<feature type="active site" description="Proton donor" evidence="1">
    <location>
        <position position="322"/>
    </location>
</feature>
<feature type="binding site" evidence="1">
    <location>
        <position position="140"/>
    </location>
    <ligand>
        <name>Ni(2+)</name>
        <dbReference type="ChEBI" id="CHEBI:49786"/>
        <label>1</label>
    </ligand>
</feature>
<feature type="binding site" evidence="1">
    <location>
        <position position="142"/>
    </location>
    <ligand>
        <name>Ni(2+)</name>
        <dbReference type="ChEBI" id="CHEBI:49786"/>
        <label>1</label>
    </ligand>
</feature>
<feature type="binding site" description="via carbamate group" evidence="1">
    <location>
        <position position="219"/>
    </location>
    <ligand>
        <name>Ni(2+)</name>
        <dbReference type="ChEBI" id="CHEBI:49786"/>
        <label>1</label>
    </ligand>
</feature>
<feature type="binding site" description="via carbamate group" evidence="1">
    <location>
        <position position="219"/>
    </location>
    <ligand>
        <name>Ni(2+)</name>
        <dbReference type="ChEBI" id="CHEBI:49786"/>
        <label>2</label>
    </ligand>
</feature>
<feature type="binding site" evidence="1">
    <location>
        <position position="221"/>
    </location>
    <ligand>
        <name>substrate</name>
    </ligand>
</feature>
<feature type="binding site" evidence="1">
    <location>
        <position position="248"/>
    </location>
    <ligand>
        <name>Ni(2+)</name>
        <dbReference type="ChEBI" id="CHEBI:49786"/>
        <label>2</label>
    </ligand>
</feature>
<feature type="binding site" evidence="1">
    <location>
        <position position="274"/>
    </location>
    <ligand>
        <name>Ni(2+)</name>
        <dbReference type="ChEBI" id="CHEBI:49786"/>
        <label>2</label>
    </ligand>
</feature>
<feature type="binding site" evidence="1">
    <location>
        <position position="362"/>
    </location>
    <ligand>
        <name>Ni(2+)</name>
        <dbReference type="ChEBI" id="CHEBI:49786"/>
        <label>1</label>
    </ligand>
</feature>
<feature type="modified residue" description="N6-carboxylysine" evidence="1">
    <location>
        <position position="219"/>
    </location>
</feature>
<evidence type="ECO:0000255" key="1">
    <source>
        <dbReference type="HAMAP-Rule" id="MF_01953"/>
    </source>
</evidence>
<gene>
    <name evidence="1" type="primary">ureC</name>
    <name type="ordered locus">NP_2010A</name>
</gene>
<reference key="1">
    <citation type="journal article" date="2005" name="Genome Res.">
        <title>Living with two extremes: conclusions from the genome sequence of Natronomonas pharaonis.</title>
        <authorList>
            <person name="Falb M."/>
            <person name="Pfeiffer F."/>
            <person name="Palm P."/>
            <person name="Rodewald K."/>
            <person name="Hickmann V."/>
            <person name="Tittor J."/>
            <person name="Oesterhelt D."/>
        </authorList>
    </citation>
    <scope>NUCLEOTIDE SEQUENCE [LARGE SCALE GENOMIC DNA]</scope>
    <source>
        <strain>ATCC 35678 / DSM 2160 / CIP 103997 / JCM 8858 / NBRC 14720 / NCIMB 2260 / Gabara</strain>
    </source>
</reference>
<name>URE1_NATPD</name>
<keyword id="KW-0963">Cytoplasm</keyword>
<keyword id="KW-0378">Hydrolase</keyword>
<keyword id="KW-0479">Metal-binding</keyword>
<keyword id="KW-0533">Nickel</keyword>
<keyword id="KW-1185">Reference proteome</keyword>
<organism>
    <name type="scientific">Natronomonas pharaonis (strain ATCC 35678 / DSM 2160 / CIP 103997 / JCM 8858 / NBRC 14720 / NCIMB 2260 / Gabara)</name>
    <name type="common">Halobacterium pharaonis</name>
    <dbReference type="NCBI Taxonomy" id="348780"/>
    <lineage>
        <taxon>Archaea</taxon>
        <taxon>Methanobacteriati</taxon>
        <taxon>Methanobacteriota</taxon>
        <taxon>Stenosarchaea group</taxon>
        <taxon>Halobacteria</taxon>
        <taxon>Halobacteriales</taxon>
        <taxon>Haloarculaceae</taxon>
        <taxon>Natronomonas</taxon>
    </lineage>
</organism>